<organism>
    <name type="scientific">Salmonella typhi</name>
    <dbReference type="NCBI Taxonomy" id="90370"/>
    <lineage>
        <taxon>Bacteria</taxon>
        <taxon>Pseudomonadati</taxon>
        <taxon>Pseudomonadota</taxon>
        <taxon>Gammaproteobacteria</taxon>
        <taxon>Enterobacterales</taxon>
        <taxon>Enterobacteriaceae</taxon>
        <taxon>Salmonella</taxon>
    </lineage>
</organism>
<proteinExistence type="inferred from homology"/>
<reference key="1">
    <citation type="journal article" date="2001" name="Nature">
        <title>Complete genome sequence of a multiple drug resistant Salmonella enterica serovar Typhi CT18.</title>
        <authorList>
            <person name="Parkhill J."/>
            <person name="Dougan G."/>
            <person name="James K.D."/>
            <person name="Thomson N.R."/>
            <person name="Pickard D."/>
            <person name="Wain J."/>
            <person name="Churcher C.M."/>
            <person name="Mungall K.L."/>
            <person name="Bentley S.D."/>
            <person name="Holden M.T.G."/>
            <person name="Sebaihia M."/>
            <person name="Baker S."/>
            <person name="Basham D."/>
            <person name="Brooks K."/>
            <person name="Chillingworth T."/>
            <person name="Connerton P."/>
            <person name="Cronin A."/>
            <person name="Davis P."/>
            <person name="Davies R.M."/>
            <person name="Dowd L."/>
            <person name="White N."/>
            <person name="Farrar J."/>
            <person name="Feltwell T."/>
            <person name="Hamlin N."/>
            <person name="Haque A."/>
            <person name="Hien T.T."/>
            <person name="Holroyd S."/>
            <person name="Jagels K."/>
            <person name="Krogh A."/>
            <person name="Larsen T.S."/>
            <person name="Leather S."/>
            <person name="Moule S."/>
            <person name="O'Gaora P."/>
            <person name="Parry C."/>
            <person name="Quail M.A."/>
            <person name="Rutherford K.M."/>
            <person name="Simmonds M."/>
            <person name="Skelton J."/>
            <person name="Stevens K."/>
            <person name="Whitehead S."/>
            <person name="Barrell B.G."/>
        </authorList>
    </citation>
    <scope>NUCLEOTIDE SEQUENCE [LARGE SCALE GENOMIC DNA]</scope>
    <source>
        <strain>CT18</strain>
    </source>
</reference>
<reference key="2">
    <citation type="journal article" date="2003" name="J. Bacteriol.">
        <title>Comparative genomics of Salmonella enterica serovar Typhi strains Ty2 and CT18.</title>
        <authorList>
            <person name="Deng W."/>
            <person name="Liou S.-R."/>
            <person name="Plunkett G. III"/>
            <person name="Mayhew G.F."/>
            <person name="Rose D.J."/>
            <person name="Burland V."/>
            <person name="Kodoyianni V."/>
            <person name="Schwartz D.C."/>
            <person name="Blattner F.R."/>
        </authorList>
    </citation>
    <scope>NUCLEOTIDE SEQUENCE [LARGE SCALE GENOMIC DNA]</scope>
    <source>
        <strain>ATCC 700931 / Ty2</strain>
    </source>
</reference>
<comment type="function">
    <text evidence="1">This protein is involved in the repair of mismatches in DNA. It is possible that it carries out the mismatch recognition step. This protein has a weak ATPase activity (By similarity).</text>
</comment>
<comment type="similarity">
    <text evidence="3">Belongs to the DNA mismatch repair MutS family.</text>
</comment>
<feature type="chain" id="PRO_0000115131" description="DNA mismatch repair protein MutS">
    <location>
        <begin position="1"/>
        <end position="855"/>
    </location>
</feature>
<feature type="binding site" evidence="2">
    <location>
        <begin position="616"/>
        <end position="623"/>
    </location>
    <ligand>
        <name>ATP</name>
        <dbReference type="ChEBI" id="CHEBI:30616"/>
    </ligand>
</feature>
<dbReference type="EMBL" id="AL513382">
    <property type="protein sequence ID" value="CAD06015.1"/>
    <property type="molecule type" value="Genomic_DNA"/>
</dbReference>
<dbReference type="EMBL" id="AE014613">
    <property type="protein sequence ID" value="AAO70369.1"/>
    <property type="molecule type" value="Genomic_DNA"/>
</dbReference>
<dbReference type="RefSeq" id="NP_457300.1">
    <property type="nucleotide sequence ID" value="NC_003198.1"/>
</dbReference>
<dbReference type="RefSeq" id="WP_001005807.1">
    <property type="nucleotide sequence ID" value="NZ_WSUR01000005.1"/>
</dbReference>
<dbReference type="SMR" id="P0A1Y1"/>
<dbReference type="STRING" id="220341.gene:17586925"/>
<dbReference type="KEGG" id="stt:t2810"/>
<dbReference type="KEGG" id="sty:STY3033"/>
<dbReference type="PATRIC" id="fig|220341.7.peg.3086"/>
<dbReference type="eggNOG" id="COG0249">
    <property type="taxonomic scope" value="Bacteria"/>
</dbReference>
<dbReference type="HOGENOM" id="CLU_002472_4_0_6"/>
<dbReference type="OMA" id="TPMMAQY"/>
<dbReference type="OrthoDB" id="9802448at2"/>
<dbReference type="Proteomes" id="UP000000541">
    <property type="component" value="Chromosome"/>
</dbReference>
<dbReference type="Proteomes" id="UP000002670">
    <property type="component" value="Chromosome"/>
</dbReference>
<dbReference type="GO" id="GO:0005829">
    <property type="term" value="C:cytosol"/>
    <property type="evidence" value="ECO:0007669"/>
    <property type="project" value="TreeGrafter"/>
</dbReference>
<dbReference type="GO" id="GO:0005524">
    <property type="term" value="F:ATP binding"/>
    <property type="evidence" value="ECO:0007669"/>
    <property type="project" value="UniProtKB-UniRule"/>
</dbReference>
<dbReference type="GO" id="GO:0140664">
    <property type="term" value="F:ATP-dependent DNA damage sensor activity"/>
    <property type="evidence" value="ECO:0007669"/>
    <property type="project" value="InterPro"/>
</dbReference>
<dbReference type="GO" id="GO:0003684">
    <property type="term" value="F:damaged DNA binding"/>
    <property type="evidence" value="ECO:0007669"/>
    <property type="project" value="UniProtKB-UniRule"/>
</dbReference>
<dbReference type="GO" id="GO:0030983">
    <property type="term" value="F:mismatched DNA binding"/>
    <property type="evidence" value="ECO:0007669"/>
    <property type="project" value="InterPro"/>
</dbReference>
<dbReference type="GO" id="GO:0006298">
    <property type="term" value="P:mismatch repair"/>
    <property type="evidence" value="ECO:0007669"/>
    <property type="project" value="UniProtKB-UniRule"/>
</dbReference>
<dbReference type="CDD" id="cd03284">
    <property type="entry name" value="ABC_MutS1"/>
    <property type="match status" value="1"/>
</dbReference>
<dbReference type="FunFam" id="1.10.1420.10:FF:000002">
    <property type="entry name" value="DNA mismatch repair protein MutS"/>
    <property type="match status" value="1"/>
</dbReference>
<dbReference type="FunFam" id="3.30.420.110:FF:000001">
    <property type="entry name" value="DNA mismatch repair protein MutS"/>
    <property type="match status" value="1"/>
</dbReference>
<dbReference type="FunFam" id="3.40.1170.10:FF:000001">
    <property type="entry name" value="DNA mismatch repair protein MutS"/>
    <property type="match status" value="1"/>
</dbReference>
<dbReference type="FunFam" id="3.40.50.300:FF:000283">
    <property type="entry name" value="DNA mismatch repair protein MutS"/>
    <property type="match status" value="1"/>
</dbReference>
<dbReference type="Gene3D" id="1.10.1420.10">
    <property type="match status" value="2"/>
</dbReference>
<dbReference type="Gene3D" id="6.10.140.430">
    <property type="match status" value="1"/>
</dbReference>
<dbReference type="Gene3D" id="3.40.1170.10">
    <property type="entry name" value="DNA repair protein MutS, domain I"/>
    <property type="match status" value="1"/>
</dbReference>
<dbReference type="Gene3D" id="3.30.420.110">
    <property type="entry name" value="MutS, connector domain"/>
    <property type="match status" value="1"/>
</dbReference>
<dbReference type="Gene3D" id="3.40.50.300">
    <property type="entry name" value="P-loop containing nucleotide triphosphate hydrolases"/>
    <property type="match status" value="1"/>
</dbReference>
<dbReference type="HAMAP" id="MF_00096">
    <property type="entry name" value="MutS"/>
    <property type="match status" value="1"/>
</dbReference>
<dbReference type="InterPro" id="IPR005748">
    <property type="entry name" value="DNA_mismatch_repair_MutS"/>
</dbReference>
<dbReference type="InterPro" id="IPR007695">
    <property type="entry name" value="DNA_mismatch_repair_MutS-lik_N"/>
</dbReference>
<dbReference type="InterPro" id="IPR017261">
    <property type="entry name" value="DNA_mismatch_repair_MutS/MSH"/>
</dbReference>
<dbReference type="InterPro" id="IPR000432">
    <property type="entry name" value="DNA_mismatch_repair_MutS_C"/>
</dbReference>
<dbReference type="InterPro" id="IPR007861">
    <property type="entry name" value="DNA_mismatch_repair_MutS_clamp"/>
</dbReference>
<dbReference type="InterPro" id="IPR007696">
    <property type="entry name" value="DNA_mismatch_repair_MutS_core"/>
</dbReference>
<dbReference type="InterPro" id="IPR016151">
    <property type="entry name" value="DNA_mismatch_repair_MutS_N"/>
</dbReference>
<dbReference type="InterPro" id="IPR036187">
    <property type="entry name" value="DNA_mismatch_repair_MutS_sf"/>
</dbReference>
<dbReference type="InterPro" id="IPR007860">
    <property type="entry name" value="DNA_mmatch_repair_MutS_con_dom"/>
</dbReference>
<dbReference type="InterPro" id="IPR045076">
    <property type="entry name" value="MutS"/>
</dbReference>
<dbReference type="InterPro" id="IPR036678">
    <property type="entry name" value="MutS_con_dom_sf"/>
</dbReference>
<dbReference type="InterPro" id="IPR027417">
    <property type="entry name" value="P-loop_NTPase"/>
</dbReference>
<dbReference type="NCBIfam" id="TIGR01070">
    <property type="entry name" value="mutS1"/>
    <property type="match status" value="1"/>
</dbReference>
<dbReference type="NCBIfam" id="NF003810">
    <property type="entry name" value="PRK05399.1"/>
    <property type="match status" value="1"/>
</dbReference>
<dbReference type="PANTHER" id="PTHR11361:SF34">
    <property type="entry name" value="DNA MISMATCH REPAIR PROTEIN MSH1, MITOCHONDRIAL"/>
    <property type="match status" value="1"/>
</dbReference>
<dbReference type="PANTHER" id="PTHR11361">
    <property type="entry name" value="DNA MISMATCH REPAIR PROTEIN MUTS FAMILY MEMBER"/>
    <property type="match status" value="1"/>
</dbReference>
<dbReference type="Pfam" id="PF01624">
    <property type="entry name" value="MutS_I"/>
    <property type="match status" value="1"/>
</dbReference>
<dbReference type="Pfam" id="PF05188">
    <property type="entry name" value="MutS_II"/>
    <property type="match status" value="1"/>
</dbReference>
<dbReference type="Pfam" id="PF05192">
    <property type="entry name" value="MutS_III"/>
    <property type="match status" value="1"/>
</dbReference>
<dbReference type="Pfam" id="PF05190">
    <property type="entry name" value="MutS_IV"/>
    <property type="match status" value="1"/>
</dbReference>
<dbReference type="Pfam" id="PF00488">
    <property type="entry name" value="MutS_V"/>
    <property type="match status" value="1"/>
</dbReference>
<dbReference type="PIRSF" id="PIRSF037677">
    <property type="entry name" value="DNA_mis_repair_Msh6"/>
    <property type="match status" value="1"/>
</dbReference>
<dbReference type="SMART" id="SM00534">
    <property type="entry name" value="MUTSac"/>
    <property type="match status" value="1"/>
</dbReference>
<dbReference type="SMART" id="SM00533">
    <property type="entry name" value="MUTSd"/>
    <property type="match status" value="1"/>
</dbReference>
<dbReference type="SUPFAM" id="SSF55271">
    <property type="entry name" value="DNA repair protein MutS, domain I"/>
    <property type="match status" value="1"/>
</dbReference>
<dbReference type="SUPFAM" id="SSF53150">
    <property type="entry name" value="DNA repair protein MutS, domain II"/>
    <property type="match status" value="1"/>
</dbReference>
<dbReference type="SUPFAM" id="SSF48334">
    <property type="entry name" value="DNA repair protein MutS, domain III"/>
    <property type="match status" value="1"/>
</dbReference>
<dbReference type="SUPFAM" id="SSF52540">
    <property type="entry name" value="P-loop containing nucleoside triphosphate hydrolases"/>
    <property type="match status" value="1"/>
</dbReference>
<dbReference type="PROSITE" id="PS00486">
    <property type="entry name" value="DNA_MISMATCH_REPAIR_2"/>
    <property type="match status" value="1"/>
</dbReference>
<protein>
    <recommendedName>
        <fullName>DNA mismatch repair protein MutS</fullName>
    </recommendedName>
</protein>
<accession>P0A1Y1</accession>
<accession>P10339</accession>
<evidence type="ECO:0000250" key="1"/>
<evidence type="ECO:0000255" key="2"/>
<evidence type="ECO:0000305" key="3"/>
<name>MUTS_SALTI</name>
<keyword id="KW-0067">ATP-binding</keyword>
<keyword id="KW-0227">DNA damage</keyword>
<keyword id="KW-0234">DNA repair</keyword>
<keyword id="KW-0238">DNA-binding</keyword>
<keyword id="KW-0547">Nucleotide-binding</keyword>
<sequence length="855" mass="95407">MNESFDKDFSNHTPMMQQYLKLKAQHPEILLFYRMGDFYELFYDDAKRASQLLDISLTKRGASAGEPIPMAGIPHHAVENYLAKLVNQGESVAICEQIGDPATSKGPVERKVVRIVTPGTISDEALLQERQDNLLAAIWQDGKGYGYATLDISSGRFRLSEPADRETMAAELQRTNPAELLYAEDFAEMALIEGRRGLRRRPLWEFEIDTARQQLNLQFGTRDLVGFGVENASRGLCAAGCLLQYVKDTQRTSLPHIRSITMERQQDSIIMDAATRRNLEITQNLAGGVENTLAAVLDCTVTPMGSRMLKRWLHMPVRNTDILRERQQTIGALQDTVSELQPVLRQVGDLERILARLALRTARPRDLARMRHAFQQLPELHAQLETVDSAPVQALRKKMGDFAELRDLLERAIIDAPPVLVRDGGVIAPGYHEELDEWRALADGATDYLDRLEIRERERTGLDTLKVGYNAVHGYYIQISRGQSHLAPINYVRRQTLKNAERYIIPELKEYEDKVLTSKGKALALEKQLYDELFDLLLPHLADLQQSANALAELDVLVNLAERAWTLNYTCPTFTDKPGIRITEGRHPVVEQVLNEPFIANPLNLSPQRRMLIITGPNMGGKSTYMRQTALIALLAYIGSYVPAQNVEIGPIDRIFTRVGAADDLASGRSTFMVEMTETANILHNATENSLVLMDEIGRGTSTYDGLSLAWACAENLANKIKALTLFATHYFELTQLPEKMEGVANVHLDALEHGDTIAFMHSVQDGAASKSYGLAVAALAGVPKEVIKRARQKLRELESISPNAAATQVDGTQMSLLAAPEETSPAVEALENLDPDSLTPRQALEWIYRLKSLV</sequence>
<gene>
    <name type="primary">mutS</name>
    <name type="ordered locus">STY3033</name>
    <name type="ordered locus">t2810</name>
</gene>